<keyword id="KW-0025">Alternative splicing</keyword>
<keyword id="KW-0090">Biological rhythms</keyword>
<keyword id="KW-0963">Cytoplasm</keyword>
<keyword id="KW-0217">Developmental protein</keyword>
<keyword id="KW-0539">Nucleus</keyword>
<keyword id="KW-0597">Phosphoprotein</keyword>
<keyword id="KW-1185">Reference proteome</keyword>
<keyword id="KW-0678">Repressor</keyword>
<keyword id="KW-0804">Transcription</keyword>
<keyword id="KW-0805">Transcription regulation</keyword>
<sequence>MKVASSSAAATAGPSCSLKAGRTAGEVVLGLSEQSVAISRCAGTRLPALLDEQQVNVLLYDMNGCYSRLKELVPTLPQNRKVSKVEILQHVIDYIRDLQLELNSESEVATAGGRGLPVRAPLSTLNGEISALAAEVRSESEYYIILLWETKATGGGCPPYFSGA</sequence>
<organism>
    <name type="scientific">Rattus norvegicus</name>
    <name type="common">Rat</name>
    <dbReference type="NCBI Taxonomy" id="10116"/>
    <lineage>
        <taxon>Eukaryota</taxon>
        <taxon>Metazoa</taxon>
        <taxon>Chordata</taxon>
        <taxon>Craniata</taxon>
        <taxon>Vertebrata</taxon>
        <taxon>Euteleostomi</taxon>
        <taxon>Mammalia</taxon>
        <taxon>Eutheria</taxon>
        <taxon>Euarchontoglires</taxon>
        <taxon>Glires</taxon>
        <taxon>Rodentia</taxon>
        <taxon>Myomorpha</taxon>
        <taxon>Muroidea</taxon>
        <taxon>Muridae</taxon>
        <taxon>Murinae</taxon>
        <taxon>Rattus</taxon>
    </lineage>
</organism>
<gene>
    <name type="primary">Id1</name>
    <name type="synonym">Id-1</name>
</gene>
<protein>
    <recommendedName>
        <fullName>DNA-binding protein inhibitor ID-1</fullName>
    </recommendedName>
    <alternativeName>
        <fullName>Inhibitor of DNA binding 1</fullName>
    </alternativeName>
    <alternativeName>
        <fullName>Inhibitor of differentiation 1</fullName>
    </alternativeName>
</protein>
<evidence type="ECO:0000250" key="1"/>
<evidence type="ECO:0000255" key="2">
    <source>
        <dbReference type="PROSITE-ProRule" id="PRU00981"/>
    </source>
</evidence>
<evidence type="ECO:0000269" key="3">
    <source>
    </source>
</evidence>
<evidence type="ECO:0000305" key="4"/>
<dbReference type="EMBL" id="L23148">
    <property type="protein sequence ID" value="AAA20403.1"/>
    <property type="molecule type" value="mRNA"/>
</dbReference>
<dbReference type="EMBL" id="D10862">
    <property type="protein sequence ID" value="BAA01633.1"/>
    <property type="molecule type" value="mRNA"/>
</dbReference>
<dbReference type="EMBL" id="M86708">
    <property type="protein sequence ID" value="AAA41090.1"/>
    <property type="molecule type" value="mRNA"/>
</dbReference>
<dbReference type="PIR" id="A53334">
    <property type="entry name" value="A53334"/>
</dbReference>
<dbReference type="PIR" id="JC2111">
    <property type="entry name" value="JC2111"/>
</dbReference>
<dbReference type="RefSeq" id="NP_036929.2">
    <molecule id="P41135-2"/>
    <property type="nucleotide sequence ID" value="NM_012797.2"/>
</dbReference>
<dbReference type="SMR" id="P41135"/>
<dbReference type="BioGRID" id="247301">
    <property type="interactions" value="4"/>
</dbReference>
<dbReference type="FunCoup" id="P41135">
    <property type="interactions" value="530"/>
</dbReference>
<dbReference type="IntAct" id="P41135">
    <property type="interactions" value="2"/>
</dbReference>
<dbReference type="STRING" id="10116.ENSRNOP00000052261"/>
<dbReference type="PhosphoSitePlus" id="P41135"/>
<dbReference type="PaxDb" id="10116-ENSRNOP00000052261"/>
<dbReference type="GeneID" id="25261"/>
<dbReference type="KEGG" id="rno:25261"/>
<dbReference type="UCSC" id="RGD:2858">
    <molecule id="P41135-1"/>
    <property type="organism name" value="rat"/>
</dbReference>
<dbReference type="AGR" id="RGD:2858"/>
<dbReference type="CTD" id="3397"/>
<dbReference type="RGD" id="2858">
    <property type="gene designation" value="Id1"/>
</dbReference>
<dbReference type="VEuPathDB" id="HostDB:ENSRNOG00000021750"/>
<dbReference type="eggNOG" id="ENOG502RZP5">
    <property type="taxonomic scope" value="Eukaryota"/>
</dbReference>
<dbReference type="HOGENOM" id="CLU_116790_0_0_1"/>
<dbReference type="InParanoid" id="P41135"/>
<dbReference type="OrthoDB" id="10047910at2759"/>
<dbReference type="PhylomeDB" id="P41135"/>
<dbReference type="TreeFam" id="TF326217"/>
<dbReference type="Reactome" id="R-RNO-2559585">
    <property type="pathway name" value="Oncogene Induced Senescence"/>
</dbReference>
<dbReference type="PRO" id="PR:P41135"/>
<dbReference type="Proteomes" id="UP000002494">
    <property type="component" value="Chromosome 3"/>
</dbReference>
<dbReference type="Bgee" id="ENSRNOG00000021750">
    <property type="expression patterns" value="Expressed in stomach and 19 other cell types or tissues"/>
</dbReference>
<dbReference type="ExpressionAtlas" id="P41135">
    <property type="expression patterns" value="baseline and differential"/>
</dbReference>
<dbReference type="GO" id="GO:0005813">
    <property type="term" value="C:centrosome"/>
    <property type="evidence" value="ECO:0000314"/>
    <property type="project" value="RGD"/>
</dbReference>
<dbReference type="GO" id="GO:0005737">
    <property type="term" value="C:cytoplasm"/>
    <property type="evidence" value="ECO:0000266"/>
    <property type="project" value="RGD"/>
</dbReference>
<dbReference type="GO" id="GO:0005634">
    <property type="term" value="C:nucleus"/>
    <property type="evidence" value="ECO:0000266"/>
    <property type="project" value="RGD"/>
</dbReference>
<dbReference type="GO" id="GO:0042802">
    <property type="term" value="F:identical protein binding"/>
    <property type="evidence" value="ECO:0000353"/>
    <property type="project" value="RGD"/>
</dbReference>
<dbReference type="GO" id="GO:0070628">
    <property type="term" value="F:proteasome binding"/>
    <property type="evidence" value="ECO:0000353"/>
    <property type="project" value="RGD"/>
</dbReference>
<dbReference type="GO" id="GO:0046983">
    <property type="term" value="F:protein dimerization activity"/>
    <property type="evidence" value="ECO:0007669"/>
    <property type="project" value="InterPro"/>
</dbReference>
<dbReference type="GO" id="GO:0003714">
    <property type="term" value="F:transcription corepressor activity"/>
    <property type="evidence" value="ECO:0000318"/>
    <property type="project" value="GO_Central"/>
</dbReference>
<dbReference type="GO" id="GO:0140416">
    <property type="term" value="F:transcription regulator inhibitor activity"/>
    <property type="evidence" value="ECO:0000266"/>
    <property type="project" value="RGD"/>
</dbReference>
<dbReference type="GO" id="GO:0006915">
    <property type="term" value="P:apoptotic process"/>
    <property type="evidence" value="ECO:0000266"/>
    <property type="project" value="RGD"/>
</dbReference>
<dbReference type="GO" id="GO:0030509">
    <property type="term" value="P:BMP signaling pathway"/>
    <property type="evidence" value="ECO:0000266"/>
    <property type="project" value="RGD"/>
</dbReference>
<dbReference type="GO" id="GO:0036164">
    <property type="term" value="P:cell-abiotic substrate adhesion"/>
    <property type="evidence" value="ECO:0000270"/>
    <property type="project" value="RGD"/>
</dbReference>
<dbReference type="GO" id="GO:1903351">
    <property type="term" value="P:cellular response to dopamine"/>
    <property type="evidence" value="ECO:0000270"/>
    <property type="project" value="RGD"/>
</dbReference>
<dbReference type="GO" id="GO:0071364">
    <property type="term" value="P:cellular response to epidermal growth factor stimulus"/>
    <property type="evidence" value="ECO:0000270"/>
    <property type="project" value="RGD"/>
</dbReference>
<dbReference type="GO" id="GO:1990090">
    <property type="term" value="P:cellular response to nerve growth factor stimulus"/>
    <property type="evidence" value="ECO:0000270"/>
    <property type="project" value="RGD"/>
</dbReference>
<dbReference type="GO" id="GO:1901653">
    <property type="term" value="P:cellular response to peptide"/>
    <property type="evidence" value="ECO:0000270"/>
    <property type="project" value="RGD"/>
</dbReference>
<dbReference type="GO" id="GO:0071560">
    <property type="term" value="P:cellular response to transforming growth factor beta stimulus"/>
    <property type="evidence" value="ECO:0000270"/>
    <property type="project" value="RGD"/>
</dbReference>
<dbReference type="GO" id="GO:0007623">
    <property type="term" value="P:circadian rhythm"/>
    <property type="evidence" value="ECO:0000266"/>
    <property type="project" value="RGD"/>
</dbReference>
<dbReference type="GO" id="GO:0032963">
    <property type="term" value="P:collagen metabolic process"/>
    <property type="evidence" value="ECO:0000266"/>
    <property type="project" value="RGD"/>
</dbReference>
<dbReference type="GO" id="GO:0072577">
    <property type="term" value="P:endothelial cell apoptotic process"/>
    <property type="evidence" value="ECO:0000266"/>
    <property type="project" value="RGD"/>
</dbReference>
<dbReference type="GO" id="GO:0001886">
    <property type="term" value="P:endothelial cell morphogenesis"/>
    <property type="evidence" value="ECO:0000266"/>
    <property type="project" value="RGD"/>
</dbReference>
<dbReference type="GO" id="GO:0007507">
    <property type="term" value="P:heart development"/>
    <property type="evidence" value="ECO:0000266"/>
    <property type="project" value="RGD"/>
</dbReference>
<dbReference type="GO" id="GO:0060425">
    <property type="term" value="P:lung morphogenesis"/>
    <property type="evidence" value="ECO:0000266"/>
    <property type="project" value="RGD"/>
</dbReference>
<dbReference type="GO" id="GO:0060426">
    <property type="term" value="P:lung vasculature development"/>
    <property type="evidence" value="ECO:0000266"/>
    <property type="project" value="RGD"/>
</dbReference>
<dbReference type="GO" id="GO:0043066">
    <property type="term" value="P:negative regulation of apoptotic process"/>
    <property type="evidence" value="ECO:0000315"/>
    <property type="project" value="RGD"/>
</dbReference>
<dbReference type="GO" id="GO:0120163">
    <property type="term" value="P:negative regulation of cold-induced thermogenesis"/>
    <property type="evidence" value="ECO:0000250"/>
    <property type="project" value="YuBioLab"/>
</dbReference>
<dbReference type="GO" id="GO:0050774">
    <property type="term" value="P:negative regulation of dendrite morphogenesis"/>
    <property type="evidence" value="ECO:0000315"/>
    <property type="project" value="RGD"/>
</dbReference>
<dbReference type="GO" id="GO:0045892">
    <property type="term" value="P:negative regulation of DNA-templated transcription"/>
    <property type="evidence" value="ECO:0000250"/>
    <property type="project" value="UniProtKB"/>
</dbReference>
<dbReference type="GO" id="GO:2000352">
    <property type="term" value="P:negative regulation of endothelial cell apoptotic process"/>
    <property type="evidence" value="ECO:0000266"/>
    <property type="project" value="RGD"/>
</dbReference>
<dbReference type="GO" id="GO:0045602">
    <property type="term" value="P:negative regulation of endothelial cell differentiation"/>
    <property type="evidence" value="ECO:0000315"/>
    <property type="project" value="RGD"/>
</dbReference>
<dbReference type="GO" id="GO:0010629">
    <property type="term" value="P:negative regulation of gene expression"/>
    <property type="evidence" value="ECO:0000266"/>
    <property type="project" value="RGD"/>
</dbReference>
<dbReference type="GO" id="GO:0045668">
    <property type="term" value="P:negative regulation of osteoblast differentiation"/>
    <property type="evidence" value="ECO:0000266"/>
    <property type="project" value="RGD"/>
</dbReference>
<dbReference type="GO" id="GO:0000122">
    <property type="term" value="P:negative regulation of transcription by RNA polymerase II"/>
    <property type="evidence" value="ECO:0000315"/>
    <property type="project" value="RGD"/>
</dbReference>
<dbReference type="GO" id="GO:0030182">
    <property type="term" value="P:neuron differentiation"/>
    <property type="evidence" value="ECO:0000270"/>
    <property type="project" value="RGD"/>
</dbReference>
<dbReference type="GO" id="GO:0032233">
    <property type="term" value="P:positive regulation of actin filament bundle assembly"/>
    <property type="evidence" value="ECO:0000315"/>
    <property type="project" value="RGD"/>
</dbReference>
<dbReference type="GO" id="GO:0050679">
    <property type="term" value="P:positive regulation of epithelial cell proliferation"/>
    <property type="evidence" value="ECO:0000315"/>
    <property type="project" value="RGD"/>
</dbReference>
<dbReference type="GO" id="GO:0010628">
    <property type="term" value="P:positive regulation of gene expression"/>
    <property type="evidence" value="ECO:0000315"/>
    <property type="project" value="RGD"/>
</dbReference>
<dbReference type="GO" id="GO:0031648">
    <property type="term" value="P:protein destabilization"/>
    <property type="evidence" value="ECO:0000266"/>
    <property type="project" value="RGD"/>
</dbReference>
<dbReference type="GO" id="GO:0045765">
    <property type="term" value="P:regulation of angiogenesis"/>
    <property type="evidence" value="ECO:0000266"/>
    <property type="project" value="RGD"/>
</dbReference>
<dbReference type="GO" id="GO:0043408">
    <property type="term" value="P:regulation of MAPK cascade"/>
    <property type="evidence" value="ECO:0000266"/>
    <property type="project" value="RGD"/>
</dbReference>
<dbReference type="GO" id="GO:1901342">
    <property type="term" value="P:regulation of vasculature development"/>
    <property type="evidence" value="ECO:0000315"/>
    <property type="project" value="RGD"/>
</dbReference>
<dbReference type="GO" id="GO:0046677">
    <property type="term" value="P:response to antibiotic"/>
    <property type="evidence" value="ECO:0000266"/>
    <property type="project" value="RGD"/>
</dbReference>
<dbReference type="CDD" id="cd19691">
    <property type="entry name" value="bHLH_dnHLH_ID1"/>
    <property type="match status" value="1"/>
</dbReference>
<dbReference type="FunFam" id="4.10.280.10:FF:000039">
    <property type="entry name" value="DNA-binding protein inhibitor ID-3"/>
    <property type="match status" value="1"/>
</dbReference>
<dbReference type="Gene3D" id="4.10.280.10">
    <property type="entry name" value="Helix-loop-helix DNA-binding domain"/>
    <property type="match status" value="1"/>
</dbReference>
<dbReference type="InterPro" id="IPR011598">
    <property type="entry name" value="bHLH_dom"/>
</dbReference>
<dbReference type="InterPro" id="IPR026052">
    <property type="entry name" value="DNA-bd_prot-inh"/>
</dbReference>
<dbReference type="InterPro" id="IPR036638">
    <property type="entry name" value="HLH_DNA-bd_sf"/>
</dbReference>
<dbReference type="PANTHER" id="PTHR11723">
    <property type="entry name" value="DNA-BINDING PROTEIN INHIBITOR"/>
    <property type="match status" value="1"/>
</dbReference>
<dbReference type="PANTHER" id="PTHR11723:SF4">
    <property type="entry name" value="DNA-BINDING PROTEIN INHIBITOR ID-1"/>
    <property type="match status" value="1"/>
</dbReference>
<dbReference type="Pfam" id="PF00010">
    <property type="entry name" value="HLH"/>
    <property type="match status" value="1"/>
</dbReference>
<dbReference type="SMART" id="SM00353">
    <property type="entry name" value="HLH"/>
    <property type="match status" value="1"/>
</dbReference>
<dbReference type="SUPFAM" id="SSF47459">
    <property type="entry name" value="HLH, helix-loop-helix DNA-binding domain"/>
    <property type="match status" value="1"/>
</dbReference>
<dbReference type="PROSITE" id="PS50888">
    <property type="entry name" value="BHLH"/>
    <property type="match status" value="1"/>
</dbReference>
<comment type="function">
    <text evidence="1">Transcriptional regulator (lacking a basic DNA binding domain) which negatively regulates the basic helix-loop-helix (bHLH) transcription factors by forming heterodimers and inhibiting their DNA binding and transcriptional activity. Implicated in regulating a variety of cellular processes, including cellular growth, senescence, differentiation, apoptosis, angiogenesis, and neoplastic transformation. Inhibits skeletal muscle and cardiac myocyte differentiation. Regulates the circadian clock by repressing the transcriptional activator activity of the CLOCK-BMAL1 heterodimer (By similarity).</text>
</comment>
<comment type="subunit">
    <text evidence="1">Heterodimer with other HLH proteins. Interacts with COPS5, IFI204, GATA4, NKX2-5, CLOCK and BMAL1 (By similarity). Isoform Short can form homodimers.</text>
</comment>
<comment type="subcellular location">
    <subcellularLocation>
        <location evidence="1">Cytoplasm</location>
    </subcellularLocation>
    <subcellularLocation>
        <location>Nucleus</location>
    </subcellularLocation>
</comment>
<comment type="alternative products">
    <event type="alternative splicing"/>
    <isoform>
        <id>P41135-1</id>
        <name>Long</name>
        <sequence type="displayed"/>
    </isoform>
    <isoform>
        <id>P41135-2</id>
        <name>Short</name>
        <name>ID1.25</name>
        <sequence type="described" ref="VSP_002110"/>
    </isoform>
    <text>Additional isoforms seem to exist.</text>
</comment>
<comment type="PTM">
    <text evidence="3">Phosphorylated in vitro by PKA and PKC.</text>
</comment>
<feature type="chain" id="PRO_0000127238" description="DNA-binding protein inhibitor ID-1">
    <location>
        <begin position="1"/>
        <end position="164"/>
    </location>
</feature>
<feature type="domain" description="bHLH" evidence="2">
    <location>
        <begin position="46"/>
        <end position="98"/>
    </location>
</feature>
<feature type="short sequence motif" description="Nuclear export signal" evidence="1">
    <location>
        <begin position="91"/>
        <end position="104"/>
    </location>
</feature>
<feature type="splice variant" id="VSP_002110" description="In isoform Short." evidence="4">
    <original>VRSESEYYIILLWETKATGGGCPPYFSGA</original>
    <variation>AACVPADDRILCR</variation>
    <location>
        <begin position="136"/>
        <end position="164"/>
    </location>
</feature>
<feature type="sequence conflict" description="In Ref. 3; BAA01633." evidence="4" ref="3">
    <original>G</original>
    <variation>A</variation>
    <location>
        <position position="113"/>
    </location>
</feature>
<accession>P41135</accession>
<name>ID1_RAT</name>
<proteinExistence type="evidence at protein level"/>
<reference key="1">
    <citation type="journal article" date="1994" name="J. Biol. Chem.">
        <title>Posttranscriptional regulation of Id1 activity in cardiac muscle. Alternative splicing of novel Id1 transcript permits homodimerization.</title>
        <authorList>
            <person name="Springhorn J.P."/>
            <person name="Singh K."/>
            <person name="Kelly R.A."/>
            <person name="Smith T.W."/>
        </authorList>
    </citation>
    <scope>NUCLEOTIDE SEQUENCE [MRNA]</scope>
    <source>
        <strain>Sprague-Dawley</strain>
        <tissue>Heart</tissue>
    </source>
</reference>
<reference key="2">
    <citation type="journal article" date="1992" name="J. Biol. Chem.">
        <title>Transcriptional regulation in cardiac muscle. Coordinate expression of Id with a neonatal phenotype during development and following a hypertrophic stimulus in adult rat ventricular myocytes in vitro.</title>
        <authorList>
            <person name="Springhorn J.P."/>
            <person name="Ellingsen O."/>
            <person name="Berger H.J."/>
            <person name="Kelly R.A."/>
            <person name="Smith T.W."/>
        </authorList>
    </citation>
    <scope>NUCLEOTIDE SEQUENCE [MRNA]</scope>
    <source>
        <strain>Sprague-Dawley</strain>
        <tissue>Heart</tissue>
    </source>
</reference>
<reference key="3">
    <citation type="journal article" date="1994" name="Biochem. Biophys. Res. Commun.">
        <title>Activation of helix-loop-helix proteins Id1, Id2 and Id3 during neural differentiation.</title>
        <authorList>
            <person name="Nagata Y."/>
            <person name="Todokoro K."/>
        </authorList>
    </citation>
    <scope>NUCLEOTIDE SEQUENCE [MRNA]</scope>
</reference>
<reference key="4">
    <citation type="journal article" date="1995" name="Biochem. Biophys. Res. Commun.">
        <title>Phosphorylation of helix-loop-helix proteins ID1, ID2 and ID3.</title>
        <authorList>
            <person name="Nagata Y."/>
            <person name="Shoji W."/>
            <person name="Obinata M."/>
            <person name="Todokoro K."/>
        </authorList>
    </citation>
    <scope>PHOSPHORYLATION</scope>
</reference>